<proteinExistence type="inferred from homology"/>
<dbReference type="EC" id="2.3.2.27"/>
<dbReference type="EMBL" id="AC051626">
    <property type="status" value="NOT_ANNOTATED_CDS"/>
    <property type="molecule type" value="Genomic_DNA"/>
</dbReference>
<dbReference type="EMBL" id="CP002688">
    <property type="protein sequence ID" value="AED92539.1"/>
    <property type="molecule type" value="Genomic_DNA"/>
</dbReference>
<dbReference type="RefSeq" id="NP_197333.2">
    <property type="nucleotide sequence ID" value="NM_121837.3"/>
</dbReference>
<dbReference type="SMR" id="Q3E9F7"/>
<dbReference type="STRING" id="3702.Q3E9F7"/>
<dbReference type="iPTMnet" id="Q3E9F7"/>
<dbReference type="PaxDb" id="3702-AT5G18320.1"/>
<dbReference type="ProteomicsDB" id="226110"/>
<dbReference type="EnsemblPlants" id="AT5G18320.1">
    <property type="protein sequence ID" value="AT5G18320.1"/>
    <property type="gene ID" value="AT5G18320"/>
</dbReference>
<dbReference type="GeneID" id="831950"/>
<dbReference type="Gramene" id="AT5G18320.1">
    <property type="protein sequence ID" value="AT5G18320.1"/>
    <property type="gene ID" value="AT5G18320"/>
</dbReference>
<dbReference type="KEGG" id="ath:AT5G18320"/>
<dbReference type="Araport" id="AT5G18320"/>
<dbReference type="TAIR" id="AT5G18320">
    <property type="gene designation" value="PUB46"/>
</dbReference>
<dbReference type="eggNOG" id="KOG0167">
    <property type="taxonomic scope" value="Eukaryota"/>
</dbReference>
<dbReference type="HOGENOM" id="CLU_006348_0_0_1"/>
<dbReference type="InParanoid" id="Q3E9F7"/>
<dbReference type="OMA" id="ENQYGTF"/>
<dbReference type="PhylomeDB" id="Q3E9F7"/>
<dbReference type="UniPathway" id="UPA00143"/>
<dbReference type="PRO" id="PR:Q3E9F7"/>
<dbReference type="Proteomes" id="UP000006548">
    <property type="component" value="Chromosome 5"/>
</dbReference>
<dbReference type="ExpressionAtlas" id="Q3E9F7">
    <property type="expression patterns" value="baseline and differential"/>
</dbReference>
<dbReference type="GO" id="GO:0004842">
    <property type="term" value="F:ubiquitin-protein transferase activity"/>
    <property type="evidence" value="ECO:0000314"/>
    <property type="project" value="TAIR"/>
</dbReference>
<dbReference type="GO" id="GO:0042631">
    <property type="term" value="P:cellular response to water deprivation"/>
    <property type="evidence" value="ECO:0000315"/>
    <property type="project" value="TAIR"/>
</dbReference>
<dbReference type="GO" id="GO:0016567">
    <property type="term" value="P:protein ubiquitination"/>
    <property type="evidence" value="ECO:0007669"/>
    <property type="project" value="UniProtKB-UniPathway"/>
</dbReference>
<dbReference type="CDD" id="cd16664">
    <property type="entry name" value="RING-Ubox_PUB"/>
    <property type="match status" value="1"/>
</dbReference>
<dbReference type="FunFam" id="1.25.10.10:FF:001242">
    <property type="entry name" value="Putative U-box domain-containing protein 47"/>
    <property type="match status" value="1"/>
</dbReference>
<dbReference type="FunFam" id="3.30.40.10:FF:001268">
    <property type="entry name" value="U-box domain-containing protein 48"/>
    <property type="match status" value="1"/>
</dbReference>
<dbReference type="Gene3D" id="1.25.10.10">
    <property type="entry name" value="Leucine-rich Repeat Variant"/>
    <property type="match status" value="1"/>
</dbReference>
<dbReference type="Gene3D" id="3.30.40.10">
    <property type="entry name" value="Zinc/RING finger domain, C3HC4 (zinc finger)"/>
    <property type="match status" value="1"/>
</dbReference>
<dbReference type="InterPro" id="IPR011989">
    <property type="entry name" value="ARM-like"/>
</dbReference>
<dbReference type="InterPro" id="IPR016024">
    <property type="entry name" value="ARM-type_fold"/>
</dbReference>
<dbReference type="InterPro" id="IPR045210">
    <property type="entry name" value="RING-Ubox_PUB"/>
</dbReference>
<dbReference type="InterPro" id="IPR003613">
    <property type="entry name" value="Ubox_domain"/>
</dbReference>
<dbReference type="InterPro" id="IPR013083">
    <property type="entry name" value="Znf_RING/FYVE/PHD"/>
</dbReference>
<dbReference type="PANTHER" id="PTHR23315">
    <property type="entry name" value="U BOX DOMAIN-CONTAINING"/>
    <property type="match status" value="1"/>
</dbReference>
<dbReference type="PANTHER" id="PTHR23315:SF265">
    <property type="entry name" value="U-BOX DOMAIN-CONTAINING PROTEIN 46-RELATED"/>
    <property type="match status" value="1"/>
</dbReference>
<dbReference type="Pfam" id="PF04564">
    <property type="entry name" value="U-box"/>
    <property type="match status" value="1"/>
</dbReference>
<dbReference type="SMART" id="SM00504">
    <property type="entry name" value="Ubox"/>
    <property type="match status" value="1"/>
</dbReference>
<dbReference type="SUPFAM" id="SSF48371">
    <property type="entry name" value="ARM repeat"/>
    <property type="match status" value="1"/>
</dbReference>
<dbReference type="SUPFAM" id="SSF57850">
    <property type="entry name" value="RING/U-box"/>
    <property type="match status" value="1"/>
</dbReference>
<dbReference type="PROSITE" id="PS51698">
    <property type="entry name" value="U_BOX"/>
    <property type="match status" value="1"/>
</dbReference>
<protein>
    <recommendedName>
        <fullName>Putative U-box domain-containing protein 46</fullName>
        <ecNumber>2.3.2.27</ecNumber>
    </recommendedName>
    <alternativeName>
        <fullName>Plant U-box protein 46</fullName>
    </alternativeName>
    <alternativeName>
        <fullName evidence="2">RING-type E3 ubiquitin transferase PUB46</fullName>
    </alternativeName>
</protein>
<reference key="1">
    <citation type="journal article" date="2000" name="Nature">
        <title>Sequence and analysis of chromosome 5 of the plant Arabidopsis thaliana.</title>
        <authorList>
            <person name="Tabata S."/>
            <person name="Kaneko T."/>
            <person name="Nakamura Y."/>
            <person name="Kotani H."/>
            <person name="Kato T."/>
            <person name="Asamizu E."/>
            <person name="Miyajima N."/>
            <person name="Sasamoto S."/>
            <person name="Kimura T."/>
            <person name="Hosouchi T."/>
            <person name="Kawashima K."/>
            <person name="Kohara M."/>
            <person name="Matsumoto M."/>
            <person name="Matsuno A."/>
            <person name="Muraki A."/>
            <person name="Nakayama S."/>
            <person name="Nakazaki N."/>
            <person name="Naruo K."/>
            <person name="Okumura S."/>
            <person name="Shinpo S."/>
            <person name="Takeuchi C."/>
            <person name="Wada T."/>
            <person name="Watanabe A."/>
            <person name="Yamada M."/>
            <person name="Yasuda M."/>
            <person name="Sato S."/>
            <person name="de la Bastide M."/>
            <person name="Huang E."/>
            <person name="Spiegel L."/>
            <person name="Gnoj L."/>
            <person name="O'Shaughnessy A."/>
            <person name="Preston R."/>
            <person name="Habermann K."/>
            <person name="Murray J."/>
            <person name="Johnson D."/>
            <person name="Rohlfing T."/>
            <person name="Nelson J."/>
            <person name="Stoneking T."/>
            <person name="Pepin K."/>
            <person name="Spieth J."/>
            <person name="Sekhon M."/>
            <person name="Armstrong J."/>
            <person name="Becker M."/>
            <person name="Belter E."/>
            <person name="Cordum H."/>
            <person name="Cordes M."/>
            <person name="Courtney L."/>
            <person name="Courtney W."/>
            <person name="Dante M."/>
            <person name="Du H."/>
            <person name="Edwards J."/>
            <person name="Fryman J."/>
            <person name="Haakensen B."/>
            <person name="Lamar E."/>
            <person name="Latreille P."/>
            <person name="Leonard S."/>
            <person name="Meyer R."/>
            <person name="Mulvaney E."/>
            <person name="Ozersky P."/>
            <person name="Riley A."/>
            <person name="Strowmatt C."/>
            <person name="Wagner-McPherson C."/>
            <person name="Wollam A."/>
            <person name="Yoakum M."/>
            <person name="Bell M."/>
            <person name="Dedhia N."/>
            <person name="Parnell L."/>
            <person name="Shah R."/>
            <person name="Rodriguez M."/>
            <person name="Hoon See L."/>
            <person name="Vil D."/>
            <person name="Baker J."/>
            <person name="Kirchoff K."/>
            <person name="Toth K."/>
            <person name="King L."/>
            <person name="Bahret A."/>
            <person name="Miller B."/>
            <person name="Marra M.A."/>
            <person name="Martienssen R."/>
            <person name="McCombie W.R."/>
            <person name="Wilson R.K."/>
            <person name="Murphy G."/>
            <person name="Bancroft I."/>
            <person name="Volckaert G."/>
            <person name="Wambutt R."/>
            <person name="Duesterhoeft A."/>
            <person name="Stiekema W."/>
            <person name="Pohl T."/>
            <person name="Entian K.-D."/>
            <person name="Terryn N."/>
            <person name="Hartley N."/>
            <person name="Bent E."/>
            <person name="Johnson S."/>
            <person name="Langham S.-A."/>
            <person name="McCullagh B."/>
            <person name="Robben J."/>
            <person name="Grymonprez B."/>
            <person name="Zimmermann W."/>
            <person name="Ramsperger U."/>
            <person name="Wedler H."/>
            <person name="Balke K."/>
            <person name="Wedler E."/>
            <person name="Peters S."/>
            <person name="van Staveren M."/>
            <person name="Dirkse W."/>
            <person name="Mooijman P."/>
            <person name="Klein Lankhorst R."/>
            <person name="Weitzenegger T."/>
            <person name="Bothe G."/>
            <person name="Rose M."/>
            <person name="Hauf J."/>
            <person name="Berneiser S."/>
            <person name="Hempel S."/>
            <person name="Feldpausch M."/>
            <person name="Lamberth S."/>
            <person name="Villarroel R."/>
            <person name="Gielen J."/>
            <person name="Ardiles W."/>
            <person name="Bents O."/>
            <person name="Lemcke K."/>
            <person name="Kolesov G."/>
            <person name="Mayer K.F.X."/>
            <person name="Rudd S."/>
            <person name="Schoof H."/>
            <person name="Schueller C."/>
            <person name="Zaccaria P."/>
            <person name="Mewes H.-W."/>
            <person name="Bevan M."/>
            <person name="Fransz P.F."/>
        </authorList>
    </citation>
    <scope>NUCLEOTIDE SEQUENCE [LARGE SCALE GENOMIC DNA]</scope>
    <source>
        <strain>cv. Columbia</strain>
    </source>
</reference>
<reference key="2">
    <citation type="journal article" date="2017" name="Plant J.">
        <title>Araport11: a complete reannotation of the Arabidopsis thaliana reference genome.</title>
        <authorList>
            <person name="Cheng C.Y."/>
            <person name="Krishnakumar V."/>
            <person name="Chan A.P."/>
            <person name="Thibaud-Nissen F."/>
            <person name="Schobel S."/>
            <person name="Town C.D."/>
        </authorList>
    </citation>
    <scope>GENOME REANNOTATION</scope>
    <source>
        <strain>cv. Columbia</strain>
    </source>
</reference>
<reference key="3">
    <citation type="journal article" date="2004" name="Plant Physiol.">
        <title>A large complement of the predicted Arabidopsis ARM repeat proteins are members of the U-box E3 ubiquitin ligase family.</title>
        <authorList>
            <person name="Mudgil Y."/>
            <person name="Shiu S.-H."/>
            <person name="Stone S.L."/>
            <person name="Salt J.N."/>
            <person name="Goring D.R."/>
        </authorList>
    </citation>
    <scope>GENE FAMILY ORGANIZATION</scope>
</reference>
<evidence type="ECO:0000250" key="1"/>
<evidence type="ECO:0000305" key="2"/>
<name>PUB46_ARATH</name>
<sequence length="458" mass="50872">MADSTETNADTLRRELQKVLTEILNDGGGNDRDETEAFSGVVKAIDEAVRILTCLRKVESKIPESDISPVEVPKEFICTLSNTIMIEPVIIASGQTYEKRYITEWLKHERTCPKTKQVLSHRLWIPNHLISDLITQWCLVNKYDHQKPSDELVAELFTSDIEALLQRVSSSSSVADQIEAAKELRHQTKKFPNVRVFFVAGIHDSITRLLSPLSTLDEAVDSSLELQENIVTALFNLSILESNKTVIAENCLVIPLLTKSLKQGTDETRRNAAATLSSLSAIDSNKIIIGNSEAVKALIDLIEEGDLLATKEATSTVFNLCIVLENKGKVVSAGLIHAATKKIKAGSNVDELLSLLALISTHNRAVEEMDKLGFIYDLFSILRKPSSLLTGENAVVIVFNMYDRNRDRSRLKVVGEEENQHGTFTKLAKQGSVRAARKAQGILQWIKRFVTGKEPQRA</sequence>
<gene>
    <name type="primary">PUB46</name>
    <name type="ordered locus">At5g18320</name>
    <name type="ORF">F20L16.40</name>
</gene>
<organism>
    <name type="scientific">Arabidopsis thaliana</name>
    <name type="common">Mouse-ear cress</name>
    <dbReference type="NCBI Taxonomy" id="3702"/>
    <lineage>
        <taxon>Eukaryota</taxon>
        <taxon>Viridiplantae</taxon>
        <taxon>Streptophyta</taxon>
        <taxon>Embryophyta</taxon>
        <taxon>Tracheophyta</taxon>
        <taxon>Spermatophyta</taxon>
        <taxon>Magnoliopsida</taxon>
        <taxon>eudicotyledons</taxon>
        <taxon>Gunneridae</taxon>
        <taxon>Pentapetalae</taxon>
        <taxon>rosids</taxon>
        <taxon>malvids</taxon>
        <taxon>Brassicales</taxon>
        <taxon>Brassicaceae</taxon>
        <taxon>Camelineae</taxon>
        <taxon>Arabidopsis</taxon>
    </lineage>
</organism>
<feature type="chain" id="PRO_0000322186" description="Putative U-box domain-containing protein 46">
    <location>
        <begin position="1"/>
        <end position="458"/>
    </location>
</feature>
<feature type="domain" description="U-box">
    <location>
        <begin position="71"/>
        <end position="144"/>
    </location>
</feature>
<feature type="repeat" description="ARM 1">
    <location>
        <begin position="241"/>
        <end position="281"/>
    </location>
</feature>
<feature type="repeat" description="ARM 2">
    <location>
        <begin position="283"/>
        <end position="322"/>
    </location>
</feature>
<comment type="function">
    <text evidence="1">Functions as an E3 ubiquitin ligase.</text>
</comment>
<comment type="catalytic activity">
    <reaction>
        <text>S-ubiquitinyl-[E2 ubiquitin-conjugating enzyme]-L-cysteine + [acceptor protein]-L-lysine = [E2 ubiquitin-conjugating enzyme]-L-cysteine + N(6)-ubiquitinyl-[acceptor protein]-L-lysine.</text>
        <dbReference type="EC" id="2.3.2.27"/>
    </reaction>
</comment>
<comment type="pathway">
    <text>Protein modification; protein ubiquitination.</text>
</comment>
<keyword id="KW-1185">Reference proteome</keyword>
<keyword id="KW-0677">Repeat</keyword>
<keyword id="KW-0808">Transferase</keyword>
<keyword id="KW-0833">Ubl conjugation pathway</keyword>
<accession>Q3E9F7</accession>